<sequence>MDVRQSIHSAHAKTLDTQGLRNEFLVEKVFVADEYTMVYSHIDRIIVGGIMPVTKTVSVGGEVGKQLGVSYFLERRELGVINIGGAGTIAVDGQCYEIGHRDALYVGKGAKEVVFASIDTATPAKFYYNCAPAHTTYPTKKVTPDEVSPVTLGDNLTSNRRTINKYFVPDVLETCQLSMGLTELAPGNLWNTMPCHTHERRMEVYFYFNMDDDACVFHMMGQPQETRHIVMHNEQAVISPSWSIHSGVGTKAYTFIWGMVGENQVFDDMDHVAVKDLR</sequence>
<reference key="1">
    <citation type="journal article" date="2008" name="J. Bacteriol.">
        <title>The pangenome structure of Escherichia coli: comparative genomic analysis of E. coli commensal and pathogenic isolates.</title>
        <authorList>
            <person name="Rasko D.A."/>
            <person name="Rosovitz M.J."/>
            <person name="Myers G.S.A."/>
            <person name="Mongodin E.F."/>
            <person name="Fricke W.F."/>
            <person name="Gajer P."/>
            <person name="Crabtree J."/>
            <person name="Sebaihia M."/>
            <person name="Thomson N.R."/>
            <person name="Chaudhuri R."/>
            <person name="Henderson I.R."/>
            <person name="Sperandio V."/>
            <person name="Ravel J."/>
        </authorList>
    </citation>
    <scope>NUCLEOTIDE SEQUENCE [LARGE SCALE GENOMIC DNA]</scope>
    <source>
        <strain>E24377A / ETEC</strain>
    </source>
</reference>
<accession>A7ZQV1</accession>
<evidence type="ECO:0000255" key="1">
    <source>
        <dbReference type="HAMAP-Rule" id="MF_00687"/>
    </source>
</evidence>
<name>KDUI_ECO24</name>
<gene>
    <name evidence="1" type="primary">kduI</name>
    <name type="ordered locus">EcE24377A_3165</name>
</gene>
<protein>
    <recommendedName>
        <fullName evidence="1">4-deoxy-L-threo-5-hexosulose-uronate ketol-isomerase</fullName>
        <ecNumber evidence="1">5.3.1.17</ecNumber>
    </recommendedName>
    <alternativeName>
        <fullName evidence="1">5-keto-4-deoxyuronate isomerase</fullName>
    </alternativeName>
    <alternativeName>
        <fullName evidence="1">DKI isomerase</fullName>
    </alternativeName>
</protein>
<proteinExistence type="inferred from homology"/>
<keyword id="KW-0413">Isomerase</keyword>
<keyword id="KW-0479">Metal-binding</keyword>
<keyword id="KW-1185">Reference proteome</keyword>
<keyword id="KW-0862">Zinc</keyword>
<dbReference type="EC" id="5.3.1.17" evidence="1"/>
<dbReference type="EMBL" id="CP000800">
    <property type="protein sequence ID" value="ABV18167.1"/>
    <property type="molecule type" value="Genomic_DNA"/>
</dbReference>
<dbReference type="RefSeq" id="WP_000383245.1">
    <property type="nucleotide sequence ID" value="NC_009801.1"/>
</dbReference>
<dbReference type="SMR" id="A7ZQV1"/>
<dbReference type="KEGG" id="ecw:EcE24377A_3165"/>
<dbReference type="HOGENOM" id="CLU_062609_0_0_6"/>
<dbReference type="UniPathway" id="UPA00545">
    <property type="reaction ID" value="UER00826"/>
</dbReference>
<dbReference type="Proteomes" id="UP000001122">
    <property type="component" value="Chromosome"/>
</dbReference>
<dbReference type="GO" id="GO:0008697">
    <property type="term" value="F:4-deoxy-L-threo-5-hexosulose-uronate ketol-isomerase activity"/>
    <property type="evidence" value="ECO:0007669"/>
    <property type="project" value="UniProtKB-UniRule"/>
</dbReference>
<dbReference type="GO" id="GO:0008270">
    <property type="term" value="F:zinc ion binding"/>
    <property type="evidence" value="ECO:0007669"/>
    <property type="project" value="UniProtKB-UniRule"/>
</dbReference>
<dbReference type="GO" id="GO:0019698">
    <property type="term" value="P:D-galacturonate catabolic process"/>
    <property type="evidence" value="ECO:0007669"/>
    <property type="project" value="TreeGrafter"/>
</dbReference>
<dbReference type="GO" id="GO:0042840">
    <property type="term" value="P:D-glucuronate catabolic process"/>
    <property type="evidence" value="ECO:0007669"/>
    <property type="project" value="TreeGrafter"/>
</dbReference>
<dbReference type="GO" id="GO:0045490">
    <property type="term" value="P:pectin catabolic process"/>
    <property type="evidence" value="ECO:0007669"/>
    <property type="project" value="UniProtKB-UniRule"/>
</dbReference>
<dbReference type="CDD" id="cd20491">
    <property type="entry name" value="cupin_KduI_C"/>
    <property type="match status" value="1"/>
</dbReference>
<dbReference type="CDD" id="cd20294">
    <property type="entry name" value="cupin_KduI_N"/>
    <property type="match status" value="1"/>
</dbReference>
<dbReference type="FunFam" id="2.60.120.10:FF:000018">
    <property type="entry name" value="4-deoxy-L-threo-5-hexosulose-uronate ketol-isomerase"/>
    <property type="match status" value="1"/>
</dbReference>
<dbReference type="FunFam" id="2.60.120.520:FF:000001">
    <property type="entry name" value="4-deoxy-L-threo-5-hexosulose-uronate ketol-isomerase"/>
    <property type="match status" value="1"/>
</dbReference>
<dbReference type="Gene3D" id="2.60.120.10">
    <property type="entry name" value="Jelly Rolls"/>
    <property type="match status" value="1"/>
</dbReference>
<dbReference type="Gene3D" id="2.60.120.520">
    <property type="entry name" value="pectin degrading enzyme 5-keto 4- deoxyuronate isomerase, domain 1"/>
    <property type="match status" value="1"/>
</dbReference>
<dbReference type="HAMAP" id="MF_00687">
    <property type="entry name" value="KduI"/>
    <property type="match status" value="1"/>
</dbReference>
<dbReference type="InterPro" id="IPR007045">
    <property type="entry name" value="KduI"/>
</dbReference>
<dbReference type="InterPro" id="IPR021120">
    <property type="entry name" value="KduI/IolB_isomerase"/>
</dbReference>
<dbReference type="InterPro" id="IPR027449">
    <property type="entry name" value="KduI_N"/>
</dbReference>
<dbReference type="InterPro" id="IPR014710">
    <property type="entry name" value="RmlC-like_jellyroll"/>
</dbReference>
<dbReference type="InterPro" id="IPR011051">
    <property type="entry name" value="RmlC_Cupin_sf"/>
</dbReference>
<dbReference type="NCBIfam" id="NF002091">
    <property type="entry name" value="PRK00924.1"/>
    <property type="match status" value="1"/>
</dbReference>
<dbReference type="PANTHER" id="PTHR38461">
    <property type="entry name" value="4-DEOXY-L-THREO-5-HEXOSULOSE-URONATE KETOL-ISOMERASE"/>
    <property type="match status" value="1"/>
</dbReference>
<dbReference type="PANTHER" id="PTHR38461:SF1">
    <property type="entry name" value="4-DEOXY-L-THREO-5-HEXOSULOSE-URONATE KETOL-ISOMERASE"/>
    <property type="match status" value="1"/>
</dbReference>
<dbReference type="Pfam" id="PF04962">
    <property type="entry name" value="KduI"/>
    <property type="match status" value="1"/>
</dbReference>
<dbReference type="PIRSF" id="PIRSF006625">
    <property type="entry name" value="KduI"/>
    <property type="match status" value="1"/>
</dbReference>
<dbReference type="SUPFAM" id="SSF51182">
    <property type="entry name" value="RmlC-like cupins"/>
    <property type="match status" value="1"/>
</dbReference>
<comment type="function">
    <text evidence="1">Catalyzes the isomerization of 5-dehydro-4-deoxy-D-glucuronate to 3-deoxy-D-glycero-2,5-hexodiulosonate.</text>
</comment>
<comment type="catalytic activity">
    <reaction evidence="1">
        <text>5-dehydro-4-deoxy-D-glucuronate = 3-deoxy-D-glycero-2,5-hexodiulosonate</text>
        <dbReference type="Rhea" id="RHEA:23896"/>
        <dbReference type="ChEBI" id="CHEBI:17117"/>
        <dbReference type="ChEBI" id="CHEBI:29071"/>
        <dbReference type="EC" id="5.3.1.17"/>
    </reaction>
</comment>
<comment type="cofactor">
    <cofactor evidence="1">
        <name>Zn(2+)</name>
        <dbReference type="ChEBI" id="CHEBI:29105"/>
    </cofactor>
    <text evidence="1">Binds 1 zinc ion per subunit.</text>
</comment>
<comment type="pathway">
    <text evidence="1">Glycan metabolism; pectin degradation; 2-dehydro-3-deoxy-D-gluconate from pectin: step 4/5.</text>
</comment>
<comment type="subunit">
    <text evidence="1">Homohexamer.</text>
</comment>
<comment type="similarity">
    <text evidence="1">Belongs to the KduI family.</text>
</comment>
<feature type="chain" id="PRO_1000062000" description="4-deoxy-L-threo-5-hexosulose-uronate ketol-isomerase">
    <location>
        <begin position="1"/>
        <end position="278"/>
    </location>
</feature>
<feature type="binding site" evidence="1">
    <location>
        <position position="196"/>
    </location>
    <ligand>
        <name>Zn(2+)</name>
        <dbReference type="ChEBI" id="CHEBI:29105"/>
    </ligand>
</feature>
<feature type="binding site" evidence="1">
    <location>
        <position position="198"/>
    </location>
    <ligand>
        <name>Zn(2+)</name>
        <dbReference type="ChEBI" id="CHEBI:29105"/>
    </ligand>
</feature>
<feature type="binding site" evidence="1">
    <location>
        <position position="203"/>
    </location>
    <ligand>
        <name>Zn(2+)</name>
        <dbReference type="ChEBI" id="CHEBI:29105"/>
    </ligand>
</feature>
<feature type="binding site" evidence="1">
    <location>
        <position position="245"/>
    </location>
    <ligand>
        <name>Zn(2+)</name>
        <dbReference type="ChEBI" id="CHEBI:29105"/>
    </ligand>
</feature>
<organism>
    <name type="scientific">Escherichia coli O139:H28 (strain E24377A / ETEC)</name>
    <dbReference type="NCBI Taxonomy" id="331111"/>
    <lineage>
        <taxon>Bacteria</taxon>
        <taxon>Pseudomonadati</taxon>
        <taxon>Pseudomonadota</taxon>
        <taxon>Gammaproteobacteria</taxon>
        <taxon>Enterobacterales</taxon>
        <taxon>Enterobacteriaceae</taxon>
        <taxon>Escherichia</taxon>
    </lineage>
</organism>